<reference key="1">
    <citation type="journal article" date="2007" name="Nature">
        <title>Evolution of genes and genomes on the Drosophila phylogeny.</title>
        <authorList>
            <consortium name="Drosophila 12 genomes consortium"/>
        </authorList>
    </citation>
    <scope>NUCLEOTIDE SEQUENCE [LARGE SCALE GENOMIC DNA]</scope>
    <source>
        <strain>MSH-3 / Tucson 14011-0111.49</strain>
    </source>
</reference>
<proteinExistence type="inferred from homology"/>
<accession>B4GMC4</accession>
<organism>
    <name type="scientific">Drosophila persimilis</name>
    <name type="common">Fruit fly</name>
    <dbReference type="NCBI Taxonomy" id="7234"/>
    <lineage>
        <taxon>Eukaryota</taxon>
        <taxon>Metazoa</taxon>
        <taxon>Ecdysozoa</taxon>
        <taxon>Arthropoda</taxon>
        <taxon>Hexapoda</taxon>
        <taxon>Insecta</taxon>
        <taxon>Pterygota</taxon>
        <taxon>Neoptera</taxon>
        <taxon>Endopterygota</taxon>
        <taxon>Diptera</taxon>
        <taxon>Brachycera</taxon>
        <taxon>Muscomorpha</taxon>
        <taxon>Ephydroidea</taxon>
        <taxon>Drosophilidae</taxon>
        <taxon>Drosophila</taxon>
        <taxon>Sophophora</taxon>
    </lineage>
</organism>
<dbReference type="EMBL" id="CH479185">
    <property type="protein sequence ID" value="EDW37998.1"/>
    <property type="molecule type" value="Genomic_DNA"/>
</dbReference>
<dbReference type="SMR" id="B4GMC4"/>
<dbReference type="STRING" id="7234.B4GMC4"/>
<dbReference type="EnsemblMetazoa" id="FBtr0177986">
    <property type="protein sequence ID" value="FBpp0176478"/>
    <property type="gene ID" value="FBgn0149978"/>
</dbReference>
<dbReference type="EnsemblMetazoa" id="XM_002019328.2">
    <property type="protein sequence ID" value="XP_002019364.1"/>
    <property type="gene ID" value="LOC6594321"/>
</dbReference>
<dbReference type="GeneID" id="6594321"/>
<dbReference type="KEGG" id="dpe:6594321"/>
<dbReference type="CTD" id="65992"/>
<dbReference type="eggNOG" id="KOG3054">
    <property type="taxonomic scope" value="Eukaryota"/>
</dbReference>
<dbReference type="HOGENOM" id="CLU_059562_1_0_1"/>
<dbReference type="OMA" id="EFTRECN"/>
<dbReference type="OrthoDB" id="2285710at2759"/>
<dbReference type="PhylomeDB" id="B4GMC4"/>
<dbReference type="Proteomes" id="UP000008744">
    <property type="component" value="Unassembled WGS sequence"/>
</dbReference>
<dbReference type="GO" id="GO:0005789">
    <property type="term" value="C:endoplasmic reticulum membrane"/>
    <property type="evidence" value="ECO:0007669"/>
    <property type="project" value="UniProtKB-SubCell"/>
</dbReference>
<dbReference type="GO" id="GO:0044389">
    <property type="term" value="F:ubiquitin-like protein ligase binding"/>
    <property type="evidence" value="ECO:0007669"/>
    <property type="project" value="TreeGrafter"/>
</dbReference>
<dbReference type="FunFam" id="1.10.10.10:FF:000143">
    <property type="entry name" value="DDRGK domain-containing protein 1"/>
    <property type="match status" value="1"/>
</dbReference>
<dbReference type="Gene3D" id="1.10.10.10">
    <property type="entry name" value="Winged helix-like DNA-binding domain superfamily/Winged helix DNA-binding domain"/>
    <property type="match status" value="1"/>
</dbReference>
<dbReference type="InterPro" id="IPR019153">
    <property type="entry name" value="DDRGK_dom-contain"/>
</dbReference>
<dbReference type="InterPro" id="IPR050899">
    <property type="entry name" value="DDRGK_domain-containing"/>
</dbReference>
<dbReference type="InterPro" id="IPR036388">
    <property type="entry name" value="WH-like_DNA-bd_sf"/>
</dbReference>
<dbReference type="InterPro" id="IPR036390">
    <property type="entry name" value="WH_DNA-bd_sf"/>
</dbReference>
<dbReference type="PANTHER" id="PTHR48176">
    <property type="entry name" value="DDRGK DOMAIN-CONTAINING PROTEIN 1"/>
    <property type="match status" value="1"/>
</dbReference>
<dbReference type="PANTHER" id="PTHR48176:SF1">
    <property type="entry name" value="DDRGK DOMAIN-CONTAINING PROTEIN 1"/>
    <property type="match status" value="1"/>
</dbReference>
<dbReference type="Pfam" id="PF09756">
    <property type="entry name" value="DDRGK"/>
    <property type="match status" value="1"/>
</dbReference>
<dbReference type="SMART" id="SM01128">
    <property type="entry name" value="DDRGK"/>
    <property type="match status" value="1"/>
</dbReference>
<dbReference type="SUPFAM" id="SSF46785">
    <property type="entry name" value="Winged helix' DNA-binding domain"/>
    <property type="match status" value="1"/>
</dbReference>
<evidence type="ECO:0000250" key="1">
    <source>
        <dbReference type="UniProtKB" id="Q96HY6"/>
    </source>
</evidence>
<evidence type="ECO:0000250" key="2">
    <source>
        <dbReference type="UniProtKB" id="Q9VDD1"/>
    </source>
</evidence>
<evidence type="ECO:0000255" key="3"/>
<evidence type="ECO:0000256" key="4">
    <source>
        <dbReference type="SAM" id="MobiDB-lite"/>
    </source>
</evidence>
<evidence type="ECO:0000305" key="5"/>
<feature type="chain" id="PRO_0000391862" description="DDRGK domain-containing protein 1">
    <location>
        <begin position="1"/>
        <end position="309"/>
    </location>
</feature>
<feature type="topological domain" description="Lumenal" evidence="5">
    <location>
        <begin position="1"/>
        <end position="2"/>
    </location>
</feature>
<feature type="transmembrane region" description="Helical" evidence="3">
    <location>
        <begin position="3"/>
        <end position="23"/>
    </location>
</feature>
<feature type="topological domain" description="Cytoplasmic" evidence="5">
    <location>
        <begin position="24"/>
        <end position="309"/>
    </location>
</feature>
<feature type="region of interest" description="Disordered" evidence="4">
    <location>
        <begin position="30"/>
        <end position="178"/>
    </location>
</feature>
<feature type="compositionally biased region" description="Low complexity" evidence="4">
    <location>
        <begin position="53"/>
        <end position="84"/>
    </location>
</feature>
<feature type="compositionally biased region" description="Acidic residues" evidence="4">
    <location>
        <begin position="85"/>
        <end position="95"/>
    </location>
</feature>
<feature type="compositionally biased region" description="Basic and acidic residues" evidence="4">
    <location>
        <begin position="107"/>
        <end position="178"/>
    </location>
</feature>
<protein>
    <recommendedName>
        <fullName>DDRGK domain-containing protein 1</fullName>
    </recommendedName>
</protein>
<name>DDRGK_DROPE</name>
<comment type="function">
    <text evidence="1 2">Substrate adapter for ufmylation, the covalent attachment of the ubiquitin-like modifier UFM1 to substrate proteins (By similarity). Required for ufmylation of Atg9; protects the nervous system during aging, possibly by stabilizing Atg9 and supporting its function (By similarity).</text>
</comment>
<comment type="subunit">
    <text evidence="2">Interacts with Atg9; the interaction is transient.</text>
</comment>
<comment type="subcellular location">
    <subcellularLocation>
        <location evidence="1">Endoplasmic reticulum membrane</location>
        <topology evidence="3">Single-pass membrane protein</topology>
    </subcellularLocation>
</comment>
<comment type="similarity">
    <text evidence="5">Belongs to the DDRGK1 family.</text>
</comment>
<sequence>MDLIILVGIASALLVVILTIFFLQKKKGGTEAKEAAAPPQRGVPLRAQEGVPRRAQIARNQRNRLRQNAPAAAPAAAAALQAADAEGDNDDENPDGDGQRMPQGAVLDEKMGAKKRAKMEAKEQKRLHREQELIDREQRKVKEAKEEAERKQQEDFQEEADRKRAEAERLVKEERERKEHEEYLKMKAGFSVEEEGFEEGDADDQDNLLADFIQYIKDNKVVLLEDLAVAFKLKTQQAIERIQDLQANGTLTGVIDDRGKFIYVSEEELAAVAKFIKQRGRVSIVELAESSNNLINLTPVSAGAGEGSS</sequence>
<gene>
    <name evidence="2" type="primary">Ddrgk1</name>
    <name type="ORF">GL12371</name>
</gene>
<keyword id="KW-0256">Endoplasmic reticulum</keyword>
<keyword id="KW-0472">Membrane</keyword>
<keyword id="KW-1185">Reference proteome</keyword>
<keyword id="KW-0812">Transmembrane</keyword>
<keyword id="KW-1133">Transmembrane helix</keyword>
<keyword id="KW-0833">Ubl conjugation pathway</keyword>